<organism>
    <name type="scientific">Eremothecium gossypii (strain ATCC 10895 / CBS 109.51 / FGSC 9923 / NRRL Y-1056)</name>
    <name type="common">Yeast</name>
    <name type="synonym">Ashbya gossypii</name>
    <dbReference type="NCBI Taxonomy" id="284811"/>
    <lineage>
        <taxon>Eukaryota</taxon>
        <taxon>Fungi</taxon>
        <taxon>Dikarya</taxon>
        <taxon>Ascomycota</taxon>
        <taxon>Saccharomycotina</taxon>
        <taxon>Saccharomycetes</taxon>
        <taxon>Saccharomycetales</taxon>
        <taxon>Saccharomycetaceae</taxon>
        <taxon>Eremothecium</taxon>
    </lineage>
</organism>
<accession>Q756H7</accession>
<comment type="function">
    <text evidence="1">Signal-recognition-particle assembly has a crucial role in targeting secretory proteins to the rough endoplasmic reticulum membrane. It must be involved intimately in the translocation of a wide variety of protein substrates (By similarity).</text>
</comment>
<comment type="subunit">
    <text evidence="1">Fungal signal recognition particle consists of a 7S RNA molecule (scR1) and at least six protein subunits: SRP72, SRP68, SRP54, SEC65, SRP21 and SRP14.</text>
</comment>
<comment type="subcellular location">
    <subcellularLocation>
        <location evidence="1">Cytoplasm</location>
    </subcellularLocation>
</comment>
<comment type="similarity">
    <text evidence="2">Belongs to the SRP19 family.</text>
</comment>
<reference key="1">
    <citation type="journal article" date="2004" name="Science">
        <title>The Ashbya gossypii genome as a tool for mapping the ancient Saccharomyces cerevisiae genome.</title>
        <authorList>
            <person name="Dietrich F.S."/>
            <person name="Voegeli S."/>
            <person name="Brachat S."/>
            <person name="Lerch A."/>
            <person name="Gates K."/>
            <person name="Steiner S."/>
            <person name="Mohr C."/>
            <person name="Poehlmann R."/>
            <person name="Luedi P."/>
            <person name="Choi S."/>
            <person name="Wing R.A."/>
            <person name="Flavier A."/>
            <person name="Gaffney T.D."/>
            <person name="Philippsen P."/>
        </authorList>
    </citation>
    <scope>NUCLEOTIDE SEQUENCE [LARGE SCALE GENOMIC DNA]</scope>
    <source>
        <strain>ATCC 10895 / CBS 109.51 / FGSC 9923 / NRRL Y-1056</strain>
    </source>
</reference>
<reference key="2">
    <citation type="journal article" date="2013" name="G3 (Bethesda)">
        <title>Genomes of Ashbya fungi isolated from insects reveal four mating-type loci, numerous translocations, lack of transposons, and distinct gene duplications.</title>
        <authorList>
            <person name="Dietrich F.S."/>
            <person name="Voegeli S."/>
            <person name="Kuo S."/>
            <person name="Philippsen P."/>
        </authorList>
    </citation>
    <scope>GENOME REANNOTATION</scope>
    <source>
        <strain>ATCC 10895 / CBS 109.51 / FGSC 9923 / NRRL Y-1056</strain>
    </source>
</reference>
<protein>
    <recommendedName>
        <fullName>Signal recognition particle SEC65 subunit</fullName>
    </recommendedName>
</protein>
<name>SEC65_EREGS</name>
<keyword id="KW-0963">Cytoplasm</keyword>
<keyword id="KW-1185">Reference proteome</keyword>
<keyword id="KW-0687">Ribonucleoprotein</keyword>
<keyword id="KW-0694">RNA-binding</keyword>
<keyword id="KW-0733">Signal recognition particle</keyword>
<gene>
    <name type="primary">SEC65</name>
    <name type="ordered locus">AER289W</name>
</gene>
<sequence length="261" mass="29514">MPKLEEIDDLEDIDNLHMDLAELDASLKTPIAPRLKPTVVRSQDSEPPLFPQIPLEGEQGPSFTFIDPKSGRVEETTKITKEDLADLKRFQILYPCYFDKNRTHAQGRQVPLELAVANPLAKTIADACRELEVLCVFEGEKTHPQDFGNPGRVRVLLKENGKAAGKYANKRWLMKNVAKYLQEHPTTLESLREIPYGPDFEGIEPSKIPLVHGFQMNEIVPLHSPFTMGHPMTKGIYTAPKVVAPEKQIKAPKNKYKVVRR</sequence>
<dbReference type="EMBL" id="AE016818">
    <property type="protein sequence ID" value="AAS52970.1"/>
    <property type="molecule type" value="Genomic_DNA"/>
</dbReference>
<dbReference type="RefSeq" id="NP_985146.1">
    <property type="nucleotide sequence ID" value="NM_210500.1"/>
</dbReference>
<dbReference type="SMR" id="Q756H7"/>
<dbReference type="FunCoup" id="Q756H7">
    <property type="interactions" value="91"/>
</dbReference>
<dbReference type="STRING" id="284811.Q756H7"/>
<dbReference type="EnsemblFungi" id="AAS52970">
    <property type="protein sequence ID" value="AAS52970"/>
    <property type="gene ID" value="AGOS_AER289W"/>
</dbReference>
<dbReference type="GeneID" id="4621358"/>
<dbReference type="KEGG" id="ago:AGOS_AER289W"/>
<dbReference type="eggNOG" id="KOG3198">
    <property type="taxonomic scope" value="Eukaryota"/>
</dbReference>
<dbReference type="HOGENOM" id="CLU_065433_1_1_1"/>
<dbReference type="InParanoid" id="Q756H7"/>
<dbReference type="OMA" id="IPKVKGF"/>
<dbReference type="OrthoDB" id="2190947at2759"/>
<dbReference type="Proteomes" id="UP000000591">
    <property type="component" value="Chromosome V"/>
</dbReference>
<dbReference type="GO" id="GO:0005786">
    <property type="term" value="C:signal recognition particle, endoplasmic reticulum targeting"/>
    <property type="evidence" value="ECO:0000318"/>
    <property type="project" value="GO_Central"/>
</dbReference>
<dbReference type="GO" id="GO:0008312">
    <property type="term" value="F:7S RNA binding"/>
    <property type="evidence" value="ECO:0000318"/>
    <property type="project" value="GO_Central"/>
</dbReference>
<dbReference type="GO" id="GO:0006617">
    <property type="term" value="P:SRP-dependent cotranslational protein targeting to membrane, signal sequence recognition"/>
    <property type="evidence" value="ECO:0000318"/>
    <property type="project" value="GO_Central"/>
</dbReference>
<dbReference type="FunFam" id="3.30.56.30:FF:000003">
    <property type="entry name" value="Signal recognition particle SEC65 subunit"/>
    <property type="match status" value="1"/>
</dbReference>
<dbReference type="Gene3D" id="3.30.56.30">
    <property type="entry name" value="Signal recognition particle, SRP19-like subunit"/>
    <property type="match status" value="1"/>
</dbReference>
<dbReference type="InterPro" id="IPR002778">
    <property type="entry name" value="Signal_recog_particle_SRP19"/>
</dbReference>
<dbReference type="InterPro" id="IPR036521">
    <property type="entry name" value="SRP19-like_sf"/>
</dbReference>
<dbReference type="PANTHER" id="PTHR17453">
    <property type="entry name" value="SIGNAL RECOGNITION PARTICLE 19 KD PROTEIN"/>
    <property type="match status" value="1"/>
</dbReference>
<dbReference type="PANTHER" id="PTHR17453:SF0">
    <property type="entry name" value="SIGNAL RECOGNITION PARTICLE 19 KDA PROTEIN"/>
    <property type="match status" value="1"/>
</dbReference>
<dbReference type="Pfam" id="PF01922">
    <property type="entry name" value="SRP19"/>
    <property type="match status" value="1"/>
</dbReference>
<dbReference type="SUPFAM" id="SSF69695">
    <property type="entry name" value="SRP19"/>
    <property type="match status" value="1"/>
</dbReference>
<feature type="chain" id="PRO_0000135204" description="Signal recognition particle SEC65 subunit">
    <location>
        <begin position="1"/>
        <end position="261"/>
    </location>
</feature>
<proteinExistence type="inferred from homology"/>
<evidence type="ECO:0000250" key="1"/>
<evidence type="ECO:0000305" key="2"/>